<comment type="function">
    <text evidence="1">Involved in the maintenance of mitochondrial membrane potential in pancreatic ductal adenocarcinoma (PDAC) cells. Promotes pancreatic ductal adenocarcinoma (PDAC) cell growth. May play a role as a nucleotide-sugar transporter (By similarity).</text>
</comment>
<comment type="subunit">
    <text evidence="1">Interacts with SLC25A5.</text>
</comment>
<comment type="subcellular location">
    <subcellularLocation>
        <location evidence="1">Mitochondrion</location>
    </subcellularLocation>
    <subcellularLocation>
        <location evidence="1">Lysosome membrane</location>
        <topology evidence="1">Multi-pass membrane protein</topology>
    </subcellularLocation>
</comment>
<comment type="similarity">
    <text evidence="4">Belongs to the SLC35F solute transporter family.</text>
</comment>
<comment type="sequence caution" evidence="4">
    <conflict type="frameshift">
        <sequence resource="EMBL-CDS" id="BAB29891"/>
    </conflict>
</comment>
<proteinExistence type="evidence at protein level"/>
<evidence type="ECO:0000250" key="1"/>
<evidence type="ECO:0000250" key="2">
    <source>
        <dbReference type="UniProtKB" id="Q8N357"/>
    </source>
</evidence>
<evidence type="ECO:0000255" key="3"/>
<evidence type="ECO:0000305" key="4"/>
<organism>
    <name type="scientific">Mus musculus</name>
    <name type="common">Mouse</name>
    <dbReference type="NCBI Taxonomy" id="10090"/>
    <lineage>
        <taxon>Eukaryota</taxon>
        <taxon>Metazoa</taxon>
        <taxon>Chordata</taxon>
        <taxon>Craniata</taxon>
        <taxon>Vertebrata</taxon>
        <taxon>Euteleostomi</taxon>
        <taxon>Mammalia</taxon>
        <taxon>Eutheria</taxon>
        <taxon>Euarchontoglires</taxon>
        <taxon>Glires</taxon>
        <taxon>Rodentia</taxon>
        <taxon>Myomorpha</taxon>
        <taxon>Muroidea</taxon>
        <taxon>Muridae</taxon>
        <taxon>Murinae</taxon>
        <taxon>Mus</taxon>
        <taxon>Mus</taxon>
    </lineage>
</organism>
<reference key="1">
    <citation type="journal article" date="2005" name="Science">
        <title>The transcriptional landscape of the mammalian genome.</title>
        <authorList>
            <person name="Carninci P."/>
            <person name="Kasukawa T."/>
            <person name="Katayama S."/>
            <person name="Gough J."/>
            <person name="Frith M.C."/>
            <person name="Maeda N."/>
            <person name="Oyama R."/>
            <person name="Ravasi T."/>
            <person name="Lenhard B."/>
            <person name="Wells C."/>
            <person name="Kodzius R."/>
            <person name="Shimokawa K."/>
            <person name="Bajic V.B."/>
            <person name="Brenner S.E."/>
            <person name="Batalov S."/>
            <person name="Forrest A.R."/>
            <person name="Zavolan M."/>
            <person name="Davis M.J."/>
            <person name="Wilming L.G."/>
            <person name="Aidinis V."/>
            <person name="Allen J.E."/>
            <person name="Ambesi-Impiombato A."/>
            <person name="Apweiler R."/>
            <person name="Aturaliya R.N."/>
            <person name="Bailey T.L."/>
            <person name="Bansal M."/>
            <person name="Baxter L."/>
            <person name="Beisel K.W."/>
            <person name="Bersano T."/>
            <person name="Bono H."/>
            <person name="Chalk A.M."/>
            <person name="Chiu K.P."/>
            <person name="Choudhary V."/>
            <person name="Christoffels A."/>
            <person name="Clutterbuck D.R."/>
            <person name="Crowe M.L."/>
            <person name="Dalla E."/>
            <person name="Dalrymple B.P."/>
            <person name="de Bono B."/>
            <person name="Della Gatta G."/>
            <person name="di Bernardo D."/>
            <person name="Down T."/>
            <person name="Engstrom P."/>
            <person name="Fagiolini M."/>
            <person name="Faulkner G."/>
            <person name="Fletcher C.F."/>
            <person name="Fukushima T."/>
            <person name="Furuno M."/>
            <person name="Futaki S."/>
            <person name="Gariboldi M."/>
            <person name="Georgii-Hemming P."/>
            <person name="Gingeras T.R."/>
            <person name="Gojobori T."/>
            <person name="Green R.E."/>
            <person name="Gustincich S."/>
            <person name="Harbers M."/>
            <person name="Hayashi Y."/>
            <person name="Hensch T.K."/>
            <person name="Hirokawa N."/>
            <person name="Hill D."/>
            <person name="Huminiecki L."/>
            <person name="Iacono M."/>
            <person name="Ikeo K."/>
            <person name="Iwama A."/>
            <person name="Ishikawa T."/>
            <person name="Jakt M."/>
            <person name="Kanapin A."/>
            <person name="Katoh M."/>
            <person name="Kawasawa Y."/>
            <person name="Kelso J."/>
            <person name="Kitamura H."/>
            <person name="Kitano H."/>
            <person name="Kollias G."/>
            <person name="Krishnan S.P."/>
            <person name="Kruger A."/>
            <person name="Kummerfeld S.K."/>
            <person name="Kurochkin I.V."/>
            <person name="Lareau L.F."/>
            <person name="Lazarevic D."/>
            <person name="Lipovich L."/>
            <person name="Liu J."/>
            <person name="Liuni S."/>
            <person name="McWilliam S."/>
            <person name="Madan Babu M."/>
            <person name="Madera M."/>
            <person name="Marchionni L."/>
            <person name="Matsuda H."/>
            <person name="Matsuzawa S."/>
            <person name="Miki H."/>
            <person name="Mignone F."/>
            <person name="Miyake S."/>
            <person name="Morris K."/>
            <person name="Mottagui-Tabar S."/>
            <person name="Mulder N."/>
            <person name="Nakano N."/>
            <person name="Nakauchi H."/>
            <person name="Ng P."/>
            <person name="Nilsson R."/>
            <person name="Nishiguchi S."/>
            <person name="Nishikawa S."/>
            <person name="Nori F."/>
            <person name="Ohara O."/>
            <person name="Okazaki Y."/>
            <person name="Orlando V."/>
            <person name="Pang K.C."/>
            <person name="Pavan W.J."/>
            <person name="Pavesi G."/>
            <person name="Pesole G."/>
            <person name="Petrovsky N."/>
            <person name="Piazza S."/>
            <person name="Reed J."/>
            <person name="Reid J.F."/>
            <person name="Ring B.Z."/>
            <person name="Ringwald M."/>
            <person name="Rost B."/>
            <person name="Ruan Y."/>
            <person name="Salzberg S.L."/>
            <person name="Sandelin A."/>
            <person name="Schneider C."/>
            <person name="Schoenbach C."/>
            <person name="Sekiguchi K."/>
            <person name="Semple C.A."/>
            <person name="Seno S."/>
            <person name="Sessa L."/>
            <person name="Sheng Y."/>
            <person name="Shibata Y."/>
            <person name="Shimada H."/>
            <person name="Shimada K."/>
            <person name="Silva D."/>
            <person name="Sinclair B."/>
            <person name="Sperling S."/>
            <person name="Stupka E."/>
            <person name="Sugiura K."/>
            <person name="Sultana R."/>
            <person name="Takenaka Y."/>
            <person name="Taki K."/>
            <person name="Tammoja K."/>
            <person name="Tan S.L."/>
            <person name="Tang S."/>
            <person name="Taylor M.S."/>
            <person name="Tegner J."/>
            <person name="Teichmann S.A."/>
            <person name="Ueda H.R."/>
            <person name="van Nimwegen E."/>
            <person name="Verardo R."/>
            <person name="Wei C.L."/>
            <person name="Yagi K."/>
            <person name="Yamanishi H."/>
            <person name="Zabarovsky E."/>
            <person name="Zhu S."/>
            <person name="Zimmer A."/>
            <person name="Hide W."/>
            <person name="Bult C."/>
            <person name="Grimmond S.M."/>
            <person name="Teasdale R.D."/>
            <person name="Liu E.T."/>
            <person name="Brusic V."/>
            <person name="Quackenbush J."/>
            <person name="Wahlestedt C."/>
            <person name="Mattick J.S."/>
            <person name="Hume D.A."/>
            <person name="Kai C."/>
            <person name="Sasaki D."/>
            <person name="Tomaru Y."/>
            <person name="Fukuda S."/>
            <person name="Kanamori-Katayama M."/>
            <person name="Suzuki M."/>
            <person name="Aoki J."/>
            <person name="Arakawa T."/>
            <person name="Iida J."/>
            <person name="Imamura K."/>
            <person name="Itoh M."/>
            <person name="Kato T."/>
            <person name="Kawaji H."/>
            <person name="Kawagashira N."/>
            <person name="Kawashima T."/>
            <person name="Kojima M."/>
            <person name="Kondo S."/>
            <person name="Konno H."/>
            <person name="Nakano K."/>
            <person name="Ninomiya N."/>
            <person name="Nishio T."/>
            <person name="Okada M."/>
            <person name="Plessy C."/>
            <person name="Shibata K."/>
            <person name="Shiraki T."/>
            <person name="Suzuki S."/>
            <person name="Tagami M."/>
            <person name="Waki K."/>
            <person name="Watahiki A."/>
            <person name="Okamura-Oho Y."/>
            <person name="Suzuki H."/>
            <person name="Kawai J."/>
            <person name="Hayashizaki Y."/>
        </authorList>
    </citation>
    <scope>NUCLEOTIDE SEQUENCE [LARGE SCALE MRNA]</scope>
    <source>
        <strain>C57BL/6J</strain>
        <tissue>Amnion</tissue>
        <tissue>Bone marrow</tissue>
        <tissue>Embryo</tissue>
        <tissue>Kidney</tissue>
        <tissue>Spinal ganglion</tissue>
        <tissue>Testis</tissue>
    </source>
</reference>
<reference key="2">
    <citation type="journal article" date="2004" name="Genome Res.">
        <title>The status, quality, and expansion of the NIH full-length cDNA project: the Mammalian Gene Collection (MGC).</title>
        <authorList>
            <consortium name="The MGC Project Team"/>
        </authorList>
    </citation>
    <scope>NUCLEOTIDE SEQUENCE [LARGE SCALE MRNA]</scope>
    <source>
        <strain>FVB/N</strain>
        <tissue>Mammary tumor</tissue>
    </source>
</reference>
<reference key="3">
    <citation type="journal article" date="2010" name="Cell">
        <title>A tissue-specific atlas of mouse protein phosphorylation and expression.</title>
        <authorList>
            <person name="Huttlin E.L."/>
            <person name="Jedrychowski M.P."/>
            <person name="Elias J.E."/>
            <person name="Goswami T."/>
            <person name="Rad R."/>
            <person name="Beausoleil S.A."/>
            <person name="Villen J."/>
            <person name="Haas W."/>
            <person name="Sowa M.E."/>
            <person name="Gygi S.P."/>
        </authorList>
    </citation>
    <scope>IDENTIFICATION BY MASS SPECTROMETRY [LARGE SCALE ANALYSIS]</scope>
    <source>
        <tissue>Brain</tissue>
        <tissue>Heart</tissue>
        <tissue>Kidney</tissue>
        <tissue>Liver</tissue>
        <tissue>Spleen</tissue>
        <tissue>Testis</tissue>
    </source>
</reference>
<keyword id="KW-0325">Glycoprotein</keyword>
<keyword id="KW-0458">Lysosome</keyword>
<keyword id="KW-0472">Membrane</keyword>
<keyword id="KW-0496">Mitochondrion</keyword>
<keyword id="KW-0597">Phosphoprotein</keyword>
<keyword id="KW-1185">Reference proteome</keyword>
<keyword id="KW-0732">Signal</keyword>
<keyword id="KW-0812">Transmembrane</keyword>
<keyword id="KW-1133">Transmembrane helix</keyword>
<keyword id="KW-0813">Transport</keyword>
<name>S35F6_MOUSE</name>
<gene>
    <name type="primary">Slc35f6</name>
</gene>
<feature type="signal peptide" evidence="3">
    <location>
        <begin position="1"/>
        <end position="18"/>
    </location>
</feature>
<feature type="chain" id="PRO_0000232515" description="Solute carrier family 35 member F6">
    <location>
        <begin position="19"/>
        <end position="372"/>
    </location>
</feature>
<feature type="transmembrane region" description="Helical" evidence="3">
    <location>
        <begin position="48"/>
        <end position="68"/>
    </location>
</feature>
<feature type="transmembrane region" description="Helical" evidence="3">
    <location>
        <begin position="89"/>
        <end position="109"/>
    </location>
</feature>
<feature type="transmembrane region" description="Helical" evidence="3">
    <location>
        <begin position="116"/>
        <end position="136"/>
    </location>
</feature>
<feature type="transmembrane region" description="Helical" evidence="3">
    <location>
        <begin position="145"/>
        <end position="165"/>
    </location>
</feature>
<feature type="transmembrane region" description="Helical" evidence="3">
    <location>
        <begin position="176"/>
        <end position="196"/>
    </location>
</feature>
<feature type="transmembrane region" description="Helical" evidence="3">
    <location>
        <begin position="211"/>
        <end position="231"/>
    </location>
</feature>
<feature type="transmembrane region" description="Helical" evidence="3">
    <location>
        <begin position="261"/>
        <end position="281"/>
    </location>
</feature>
<feature type="transmembrane region" description="Helical" evidence="3">
    <location>
        <begin position="293"/>
        <end position="312"/>
    </location>
</feature>
<feature type="transmembrane region" description="Helical" evidence="3">
    <location>
        <begin position="320"/>
        <end position="336"/>
    </location>
</feature>
<feature type="domain" description="EamA">
    <location>
        <begin position="105"/>
        <end position="160"/>
    </location>
</feature>
<feature type="modified residue" description="Phosphothreonine" evidence="2">
    <location>
        <position position="366"/>
    </location>
</feature>
<feature type="glycosylation site" description="N-linked (GlcNAc...) asparagine" evidence="3">
    <location>
        <position position="110"/>
    </location>
</feature>
<feature type="sequence conflict" description="In Ref. 1; BAC34613." evidence="4" ref="1">
    <original>C</original>
    <variation>W</variation>
    <location>
        <position position="36"/>
    </location>
</feature>
<feature type="sequence conflict" description="In Ref. 1; BAE30131." evidence="4" ref="1">
    <original>Y</original>
    <variation>C</variation>
    <location>
        <position position="202"/>
    </location>
</feature>
<sequence>MAWTKYQLFLAGLMLVTGSINTLSAKWADNFVAEGCGGSQEHSFKHPFVQAVGMFLGEFSCLAAFYLLKCQGRRQSASSVEPQQPFNTLLFLPPALCDMTGTSIMYVALNMTSASSFQMLRGAVIIFTGLFSVAFLDRRLAPSQWLGILITIAGLVVVGLADLLSKHDSQHKLSEVITGDLLIIMAQIIIAIQMVLEEKFVYKHNIHPLQAVGIEGFFGFVILSLLLVPMFYIPTASFSGNPRGVLEDALDAFCQVGRQPLIALALLGNISSIAFFNFSGISVTKELSATTRMVLDTLRTIVIWAFTLALGWEIFYPLQILGFLILLMGTALYNGLHRPLLAFLSRRWRLPTQEGEQERLLGDSRTPINEAS</sequence>
<accession>Q8VE96</accession>
<accession>Q3UB33</accession>
<accession>Q8BKN1</accession>
<accession>Q9D5B2</accession>
<protein>
    <recommendedName>
        <fullName>Solute carrier family 35 member F6</fullName>
    </recommendedName>
    <alternativeName>
        <fullName>ANT2-binding protein</fullName>
        <shortName>ANT2BP</shortName>
    </alternativeName>
    <alternativeName>
        <fullName>Transport and Golgi organization 9 homolog</fullName>
    </alternativeName>
</protein>
<dbReference type="EMBL" id="AK015555">
    <property type="protein sequence ID" value="BAB29891.1"/>
    <property type="status" value="ALT_FRAME"/>
    <property type="molecule type" value="mRNA"/>
</dbReference>
<dbReference type="EMBL" id="AK049408">
    <property type="protein sequence ID" value="BAC33740.1"/>
    <property type="molecule type" value="mRNA"/>
</dbReference>
<dbReference type="EMBL" id="AK051359">
    <property type="protein sequence ID" value="BAC34613.1"/>
    <property type="molecule type" value="mRNA"/>
</dbReference>
<dbReference type="EMBL" id="AK149968">
    <property type="protein sequence ID" value="BAE29202.1"/>
    <property type="molecule type" value="mRNA"/>
</dbReference>
<dbReference type="EMBL" id="AK151122">
    <property type="protein sequence ID" value="BAE30131.1"/>
    <property type="molecule type" value="mRNA"/>
</dbReference>
<dbReference type="EMBL" id="AK159707">
    <property type="protein sequence ID" value="BAE35306.1"/>
    <property type="molecule type" value="mRNA"/>
</dbReference>
<dbReference type="EMBL" id="AK169121">
    <property type="protein sequence ID" value="BAE40901.1"/>
    <property type="molecule type" value="mRNA"/>
</dbReference>
<dbReference type="EMBL" id="AK169163">
    <property type="protein sequence ID" value="BAE40942.1"/>
    <property type="molecule type" value="mRNA"/>
</dbReference>
<dbReference type="EMBL" id="BC019457">
    <property type="protein sequence ID" value="AAH19457.1"/>
    <property type="molecule type" value="mRNA"/>
</dbReference>
<dbReference type="CCDS" id="CCDS19161.1"/>
<dbReference type="RefSeq" id="NP_783606.2">
    <property type="nucleotide sequence ID" value="NM_175675.3"/>
</dbReference>
<dbReference type="SMR" id="Q8VE96"/>
<dbReference type="FunCoup" id="Q8VE96">
    <property type="interactions" value="2952"/>
</dbReference>
<dbReference type="STRING" id="10090.ENSMUSP00000058680"/>
<dbReference type="GlyCosmos" id="Q8VE96">
    <property type="glycosylation" value="1 site, No reported glycans"/>
</dbReference>
<dbReference type="GlyGen" id="Q8VE96">
    <property type="glycosylation" value="1 site"/>
</dbReference>
<dbReference type="iPTMnet" id="Q8VE96"/>
<dbReference type="PhosphoSitePlus" id="Q8VE96"/>
<dbReference type="SwissPalm" id="Q8VE96"/>
<dbReference type="jPOST" id="Q8VE96"/>
<dbReference type="PaxDb" id="10090-ENSMUSP00000058680"/>
<dbReference type="PeptideAtlas" id="Q8VE96"/>
<dbReference type="ProteomicsDB" id="256564"/>
<dbReference type="Pumba" id="Q8VE96"/>
<dbReference type="Antibodypedia" id="28001">
    <property type="antibodies" value="132 antibodies from 20 providers"/>
</dbReference>
<dbReference type="Ensembl" id="ENSMUST00000062962.12">
    <property type="protein sequence ID" value="ENSMUSP00000058680.6"/>
    <property type="gene ID" value="ENSMUSG00000029175.18"/>
</dbReference>
<dbReference type="GeneID" id="74919"/>
<dbReference type="KEGG" id="mmu:74919"/>
<dbReference type="UCSC" id="uc008wvs.2">
    <property type="organism name" value="mouse"/>
</dbReference>
<dbReference type="AGR" id="MGI:1922169"/>
<dbReference type="CTD" id="54978"/>
<dbReference type="MGI" id="MGI:1922169">
    <property type="gene designation" value="Slc35f6"/>
</dbReference>
<dbReference type="VEuPathDB" id="HostDB:ENSMUSG00000029175"/>
<dbReference type="eggNOG" id="KOG3912">
    <property type="taxonomic scope" value="Eukaryota"/>
</dbReference>
<dbReference type="GeneTree" id="ENSGT00390000017237"/>
<dbReference type="HOGENOM" id="CLU_025028_1_0_1"/>
<dbReference type="InParanoid" id="Q8VE96"/>
<dbReference type="OMA" id="FIYKHNV"/>
<dbReference type="OrthoDB" id="29773at2759"/>
<dbReference type="PhylomeDB" id="Q8VE96"/>
<dbReference type="TreeFam" id="TF105890"/>
<dbReference type="BioGRID-ORCS" id="74919">
    <property type="hits" value="1 hit in 77 CRISPR screens"/>
</dbReference>
<dbReference type="ChiTaRS" id="Slc35f6">
    <property type="organism name" value="mouse"/>
</dbReference>
<dbReference type="PRO" id="PR:Q8VE96"/>
<dbReference type="Proteomes" id="UP000000589">
    <property type="component" value="Chromosome 5"/>
</dbReference>
<dbReference type="RNAct" id="Q8VE96">
    <property type="molecule type" value="protein"/>
</dbReference>
<dbReference type="Bgee" id="ENSMUSG00000029175">
    <property type="expression patterns" value="Expressed in interventricular septum and 238 other cell types or tissues"/>
</dbReference>
<dbReference type="ExpressionAtlas" id="Q8VE96">
    <property type="expression patterns" value="baseline and differential"/>
</dbReference>
<dbReference type="GO" id="GO:0005829">
    <property type="term" value="C:cytosol"/>
    <property type="evidence" value="ECO:0007669"/>
    <property type="project" value="Ensembl"/>
</dbReference>
<dbReference type="GO" id="GO:0005765">
    <property type="term" value="C:lysosomal membrane"/>
    <property type="evidence" value="ECO:0000250"/>
    <property type="project" value="UniProtKB"/>
</dbReference>
<dbReference type="GO" id="GO:0005764">
    <property type="term" value="C:lysosome"/>
    <property type="evidence" value="ECO:0000314"/>
    <property type="project" value="MGI"/>
</dbReference>
<dbReference type="GO" id="GO:0005739">
    <property type="term" value="C:mitochondrion"/>
    <property type="evidence" value="ECO:0000250"/>
    <property type="project" value="UniProtKB"/>
</dbReference>
<dbReference type="GO" id="GO:0005654">
    <property type="term" value="C:nucleoplasm"/>
    <property type="evidence" value="ECO:0007669"/>
    <property type="project" value="Ensembl"/>
</dbReference>
<dbReference type="GO" id="GO:0022857">
    <property type="term" value="F:transmembrane transporter activity"/>
    <property type="evidence" value="ECO:0007669"/>
    <property type="project" value="InterPro"/>
</dbReference>
<dbReference type="GO" id="GO:1901029">
    <property type="term" value="P:negative regulation of mitochondrial outer membrane permeabilization involved in apoptotic signaling pathway"/>
    <property type="evidence" value="ECO:0000250"/>
    <property type="project" value="UniProtKB"/>
</dbReference>
<dbReference type="GO" id="GO:0008284">
    <property type="term" value="P:positive regulation of cell population proliferation"/>
    <property type="evidence" value="ECO:0000250"/>
    <property type="project" value="UniProtKB"/>
</dbReference>
<dbReference type="Gene3D" id="1.10.3730.20">
    <property type="match status" value="1"/>
</dbReference>
<dbReference type="InterPro" id="IPR009262">
    <property type="entry name" value="SLC35_F1/F2/F6"/>
</dbReference>
<dbReference type="InterPro" id="IPR012404">
    <property type="entry name" value="UCP036436"/>
</dbReference>
<dbReference type="PANTHER" id="PTHR13146">
    <property type="match status" value="1"/>
</dbReference>
<dbReference type="PANTHER" id="PTHR13146:SF0">
    <property type="entry name" value="SOLUTE CARRIER FAMILY 35 MEMBER F6"/>
    <property type="match status" value="1"/>
</dbReference>
<dbReference type="Pfam" id="PF06027">
    <property type="entry name" value="SLC35F"/>
    <property type="match status" value="1"/>
</dbReference>
<dbReference type="PIRSF" id="PIRSF036436">
    <property type="entry name" value="UCP036436"/>
    <property type="match status" value="1"/>
</dbReference>
<dbReference type="SUPFAM" id="SSF103481">
    <property type="entry name" value="Multidrug resistance efflux transporter EmrE"/>
    <property type="match status" value="1"/>
</dbReference>